<dbReference type="EMBL" id="CP000606">
    <property type="protein sequence ID" value="ABO25148.1"/>
    <property type="molecule type" value="Genomic_DNA"/>
</dbReference>
<dbReference type="RefSeq" id="WP_011867078.1">
    <property type="nucleotide sequence ID" value="NC_009092.1"/>
</dbReference>
<dbReference type="SMR" id="A3QI50"/>
<dbReference type="STRING" id="323850.Shew_3282"/>
<dbReference type="KEGG" id="slo:Shew_3282"/>
<dbReference type="eggNOG" id="COG0238">
    <property type="taxonomic scope" value="Bacteria"/>
</dbReference>
<dbReference type="HOGENOM" id="CLU_148710_2_2_6"/>
<dbReference type="OrthoDB" id="9812008at2"/>
<dbReference type="Proteomes" id="UP000001558">
    <property type="component" value="Chromosome"/>
</dbReference>
<dbReference type="GO" id="GO:0022627">
    <property type="term" value="C:cytosolic small ribosomal subunit"/>
    <property type="evidence" value="ECO:0007669"/>
    <property type="project" value="TreeGrafter"/>
</dbReference>
<dbReference type="GO" id="GO:0070181">
    <property type="term" value="F:small ribosomal subunit rRNA binding"/>
    <property type="evidence" value="ECO:0007669"/>
    <property type="project" value="TreeGrafter"/>
</dbReference>
<dbReference type="GO" id="GO:0003735">
    <property type="term" value="F:structural constituent of ribosome"/>
    <property type="evidence" value="ECO:0007669"/>
    <property type="project" value="InterPro"/>
</dbReference>
<dbReference type="GO" id="GO:0006412">
    <property type="term" value="P:translation"/>
    <property type="evidence" value="ECO:0007669"/>
    <property type="project" value="UniProtKB-UniRule"/>
</dbReference>
<dbReference type="FunFam" id="4.10.640.10:FF:000001">
    <property type="entry name" value="30S ribosomal protein S18"/>
    <property type="match status" value="1"/>
</dbReference>
<dbReference type="Gene3D" id="4.10.640.10">
    <property type="entry name" value="Ribosomal protein S18"/>
    <property type="match status" value="1"/>
</dbReference>
<dbReference type="HAMAP" id="MF_00270">
    <property type="entry name" value="Ribosomal_bS18"/>
    <property type="match status" value="1"/>
</dbReference>
<dbReference type="InterPro" id="IPR001648">
    <property type="entry name" value="Ribosomal_bS18"/>
</dbReference>
<dbReference type="InterPro" id="IPR018275">
    <property type="entry name" value="Ribosomal_bS18_CS"/>
</dbReference>
<dbReference type="InterPro" id="IPR036870">
    <property type="entry name" value="Ribosomal_bS18_sf"/>
</dbReference>
<dbReference type="NCBIfam" id="TIGR00165">
    <property type="entry name" value="S18"/>
    <property type="match status" value="1"/>
</dbReference>
<dbReference type="PANTHER" id="PTHR13479">
    <property type="entry name" value="30S RIBOSOMAL PROTEIN S18"/>
    <property type="match status" value="1"/>
</dbReference>
<dbReference type="PANTHER" id="PTHR13479:SF40">
    <property type="entry name" value="SMALL RIBOSOMAL SUBUNIT PROTEIN BS18M"/>
    <property type="match status" value="1"/>
</dbReference>
<dbReference type="Pfam" id="PF01084">
    <property type="entry name" value="Ribosomal_S18"/>
    <property type="match status" value="1"/>
</dbReference>
<dbReference type="PRINTS" id="PR00974">
    <property type="entry name" value="RIBOSOMALS18"/>
</dbReference>
<dbReference type="SUPFAM" id="SSF46911">
    <property type="entry name" value="Ribosomal protein S18"/>
    <property type="match status" value="1"/>
</dbReference>
<dbReference type="PROSITE" id="PS00057">
    <property type="entry name" value="RIBOSOMAL_S18"/>
    <property type="match status" value="1"/>
</dbReference>
<reference key="1">
    <citation type="submission" date="2007-03" db="EMBL/GenBank/DDBJ databases">
        <title>Complete sequence of Shewanella loihica PV-4.</title>
        <authorList>
            <consortium name="US DOE Joint Genome Institute"/>
            <person name="Copeland A."/>
            <person name="Lucas S."/>
            <person name="Lapidus A."/>
            <person name="Barry K."/>
            <person name="Detter J.C."/>
            <person name="Glavina del Rio T."/>
            <person name="Hammon N."/>
            <person name="Israni S."/>
            <person name="Dalin E."/>
            <person name="Tice H."/>
            <person name="Pitluck S."/>
            <person name="Chain P."/>
            <person name="Malfatti S."/>
            <person name="Shin M."/>
            <person name="Vergez L."/>
            <person name="Schmutz J."/>
            <person name="Larimer F."/>
            <person name="Land M."/>
            <person name="Hauser L."/>
            <person name="Kyrpides N."/>
            <person name="Mikhailova N."/>
            <person name="Romine M.F."/>
            <person name="Serres G."/>
            <person name="Fredrickson J."/>
            <person name="Tiedje J."/>
            <person name="Richardson P."/>
        </authorList>
    </citation>
    <scope>NUCLEOTIDE SEQUENCE [LARGE SCALE GENOMIC DNA]</scope>
    <source>
        <strain>ATCC BAA-1088 / PV-4</strain>
    </source>
</reference>
<organism>
    <name type="scientific">Shewanella loihica (strain ATCC BAA-1088 / PV-4)</name>
    <dbReference type="NCBI Taxonomy" id="323850"/>
    <lineage>
        <taxon>Bacteria</taxon>
        <taxon>Pseudomonadati</taxon>
        <taxon>Pseudomonadota</taxon>
        <taxon>Gammaproteobacteria</taxon>
        <taxon>Alteromonadales</taxon>
        <taxon>Shewanellaceae</taxon>
        <taxon>Shewanella</taxon>
    </lineage>
</organism>
<proteinExistence type="inferred from homology"/>
<gene>
    <name evidence="1" type="primary">rpsR</name>
    <name type="ordered locus">Shew_3282</name>
</gene>
<accession>A3QI50</accession>
<name>RS18_SHELP</name>
<keyword id="KW-1185">Reference proteome</keyword>
<keyword id="KW-0687">Ribonucleoprotein</keyword>
<keyword id="KW-0689">Ribosomal protein</keyword>
<keyword id="KW-0694">RNA-binding</keyword>
<keyword id="KW-0699">rRNA-binding</keyword>
<evidence type="ECO:0000255" key="1">
    <source>
        <dbReference type="HAMAP-Rule" id="MF_00270"/>
    </source>
</evidence>
<evidence type="ECO:0000305" key="2"/>
<protein>
    <recommendedName>
        <fullName evidence="1">Small ribosomal subunit protein bS18</fullName>
    </recommendedName>
    <alternativeName>
        <fullName evidence="2">30S ribosomal protein S18</fullName>
    </alternativeName>
</protein>
<comment type="function">
    <text evidence="1">Binds as a heterodimer with protein bS6 to the central domain of the 16S rRNA, where it helps stabilize the platform of the 30S subunit.</text>
</comment>
<comment type="subunit">
    <text evidence="1">Part of the 30S ribosomal subunit. Forms a tight heterodimer with protein bS6.</text>
</comment>
<comment type="similarity">
    <text evidence="1">Belongs to the bacterial ribosomal protein bS18 family.</text>
</comment>
<feature type="chain" id="PRO_1000003604" description="Small ribosomal subunit protein bS18">
    <location>
        <begin position="1"/>
        <end position="75"/>
    </location>
</feature>
<sequence length="75" mass="8874">MARYFRRRKFCRFTAEGVTEIDYKDIATLKNYITESGKIVPSRITGTNAKYQRQLARAIKRARYLSLLPYTDLHQ</sequence>